<evidence type="ECO:0000255" key="1">
    <source>
        <dbReference type="HAMAP-Rule" id="MF_00374"/>
    </source>
</evidence>
<evidence type="ECO:0000305" key="2"/>
<keyword id="KW-1185">Reference proteome</keyword>
<keyword id="KW-0687">Ribonucleoprotein</keyword>
<keyword id="KW-0689">Ribosomal protein</keyword>
<organism>
    <name type="scientific">Chromobacterium violaceum (strain ATCC 12472 / DSM 30191 / JCM 1249 / CCUG 213 / NBRC 12614 / NCIMB 9131 / NCTC 9757 / MK)</name>
    <dbReference type="NCBI Taxonomy" id="243365"/>
    <lineage>
        <taxon>Bacteria</taxon>
        <taxon>Pseudomonadati</taxon>
        <taxon>Pseudomonadota</taxon>
        <taxon>Betaproteobacteria</taxon>
        <taxon>Neisseriales</taxon>
        <taxon>Chromobacteriaceae</taxon>
        <taxon>Chromobacterium</taxon>
    </lineage>
</organism>
<dbReference type="EMBL" id="AE016825">
    <property type="protein sequence ID" value="AAQ61838.1"/>
    <property type="molecule type" value="Genomic_DNA"/>
</dbReference>
<dbReference type="RefSeq" id="WP_011137725.1">
    <property type="nucleotide sequence ID" value="NC_005085.1"/>
</dbReference>
<dbReference type="SMR" id="Q7NQG0"/>
<dbReference type="STRING" id="243365.CV_4178"/>
<dbReference type="GeneID" id="66366350"/>
<dbReference type="KEGG" id="cvi:CV_4178"/>
<dbReference type="eggNOG" id="COG0255">
    <property type="taxonomic scope" value="Bacteria"/>
</dbReference>
<dbReference type="HOGENOM" id="CLU_158491_1_2_4"/>
<dbReference type="OrthoDB" id="9815192at2"/>
<dbReference type="Proteomes" id="UP000001424">
    <property type="component" value="Chromosome"/>
</dbReference>
<dbReference type="GO" id="GO:0022625">
    <property type="term" value="C:cytosolic large ribosomal subunit"/>
    <property type="evidence" value="ECO:0007669"/>
    <property type="project" value="TreeGrafter"/>
</dbReference>
<dbReference type="GO" id="GO:0003735">
    <property type="term" value="F:structural constituent of ribosome"/>
    <property type="evidence" value="ECO:0007669"/>
    <property type="project" value="InterPro"/>
</dbReference>
<dbReference type="GO" id="GO:0006412">
    <property type="term" value="P:translation"/>
    <property type="evidence" value="ECO:0007669"/>
    <property type="project" value="UniProtKB-UniRule"/>
</dbReference>
<dbReference type="CDD" id="cd00427">
    <property type="entry name" value="Ribosomal_L29_HIP"/>
    <property type="match status" value="1"/>
</dbReference>
<dbReference type="FunFam" id="1.10.287.310:FF:000001">
    <property type="entry name" value="50S ribosomal protein L29"/>
    <property type="match status" value="1"/>
</dbReference>
<dbReference type="Gene3D" id="1.10.287.310">
    <property type="match status" value="1"/>
</dbReference>
<dbReference type="HAMAP" id="MF_00374">
    <property type="entry name" value="Ribosomal_uL29"/>
    <property type="match status" value="1"/>
</dbReference>
<dbReference type="InterPro" id="IPR050063">
    <property type="entry name" value="Ribosomal_protein_uL29"/>
</dbReference>
<dbReference type="InterPro" id="IPR001854">
    <property type="entry name" value="Ribosomal_uL29"/>
</dbReference>
<dbReference type="InterPro" id="IPR018254">
    <property type="entry name" value="Ribosomal_uL29_CS"/>
</dbReference>
<dbReference type="InterPro" id="IPR036049">
    <property type="entry name" value="Ribosomal_uL29_sf"/>
</dbReference>
<dbReference type="NCBIfam" id="TIGR00012">
    <property type="entry name" value="L29"/>
    <property type="match status" value="1"/>
</dbReference>
<dbReference type="PANTHER" id="PTHR10916">
    <property type="entry name" value="60S RIBOSOMAL PROTEIN L35/50S RIBOSOMAL PROTEIN L29"/>
    <property type="match status" value="1"/>
</dbReference>
<dbReference type="PANTHER" id="PTHR10916:SF0">
    <property type="entry name" value="LARGE RIBOSOMAL SUBUNIT PROTEIN UL29C"/>
    <property type="match status" value="1"/>
</dbReference>
<dbReference type="Pfam" id="PF00831">
    <property type="entry name" value="Ribosomal_L29"/>
    <property type="match status" value="1"/>
</dbReference>
<dbReference type="SUPFAM" id="SSF46561">
    <property type="entry name" value="Ribosomal protein L29 (L29p)"/>
    <property type="match status" value="1"/>
</dbReference>
<dbReference type="PROSITE" id="PS00579">
    <property type="entry name" value="RIBOSOMAL_L29"/>
    <property type="match status" value="1"/>
</dbReference>
<reference key="1">
    <citation type="journal article" date="2003" name="Proc. Natl. Acad. Sci. U.S.A.">
        <title>The complete genome sequence of Chromobacterium violaceum reveals remarkable and exploitable bacterial adaptability.</title>
        <authorList>
            <person name="Vasconcelos A.T.R."/>
            <person name="de Almeida D.F."/>
            <person name="Hungria M."/>
            <person name="Guimaraes C.T."/>
            <person name="Antonio R.V."/>
            <person name="Almeida F.C."/>
            <person name="de Almeida L.G.P."/>
            <person name="de Almeida R."/>
            <person name="Alves-Gomes J.A."/>
            <person name="Andrade E.M."/>
            <person name="Araripe J."/>
            <person name="de Araujo M.F.F."/>
            <person name="Astolfi-Filho S."/>
            <person name="Azevedo V."/>
            <person name="Baptista A.J."/>
            <person name="Bataus L.A.M."/>
            <person name="Batista J.S."/>
            <person name="Belo A."/>
            <person name="van den Berg C."/>
            <person name="Bogo M."/>
            <person name="Bonatto S."/>
            <person name="Bordignon J."/>
            <person name="Brigido M.M."/>
            <person name="Brito C.A."/>
            <person name="Brocchi M."/>
            <person name="Burity H.A."/>
            <person name="Camargo A.A."/>
            <person name="Cardoso D.D.P."/>
            <person name="Carneiro N.P."/>
            <person name="Carraro D.M."/>
            <person name="Carvalho C.M.B."/>
            <person name="Cascardo J.C.M."/>
            <person name="Cavada B.S."/>
            <person name="Chueire L.M.O."/>
            <person name="Creczynski-Pasa T.B."/>
            <person name="Cunha-Junior N.C."/>
            <person name="Fagundes N."/>
            <person name="Falcao C.L."/>
            <person name="Fantinatti F."/>
            <person name="Farias I.P."/>
            <person name="Felipe M.S.S."/>
            <person name="Ferrari L.P."/>
            <person name="Ferro J.A."/>
            <person name="Ferro M.I.T."/>
            <person name="Franco G.R."/>
            <person name="Freitas N.S.A."/>
            <person name="Furlan L.R."/>
            <person name="Gazzinelli R.T."/>
            <person name="Gomes E.A."/>
            <person name="Goncalves P.R."/>
            <person name="Grangeiro T.B."/>
            <person name="Grattapaglia D."/>
            <person name="Grisard E.C."/>
            <person name="Hanna E.S."/>
            <person name="Jardim S.N."/>
            <person name="Laurino J."/>
            <person name="Leoi L.C.T."/>
            <person name="Lima L.F.A."/>
            <person name="Loureiro M.F."/>
            <person name="Lyra M.C.C.P."/>
            <person name="Madeira H.M.F."/>
            <person name="Manfio G.P."/>
            <person name="Maranhao A.Q."/>
            <person name="Martins W.S."/>
            <person name="di Mauro S.M.Z."/>
            <person name="de Medeiros S.R.B."/>
            <person name="Meissner R.V."/>
            <person name="Moreira M.A.M."/>
            <person name="Nascimento F.F."/>
            <person name="Nicolas M.F."/>
            <person name="Oliveira J.G."/>
            <person name="Oliveira S.C."/>
            <person name="Paixao R.F.C."/>
            <person name="Parente J.A."/>
            <person name="Pedrosa F.O."/>
            <person name="Pena S.D.J."/>
            <person name="Pereira J.O."/>
            <person name="Pereira M."/>
            <person name="Pinto L.S.R.C."/>
            <person name="Pinto L.S."/>
            <person name="Porto J.I.R."/>
            <person name="Potrich D.P."/>
            <person name="Ramalho-Neto C.E."/>
            <person name="Reis A.M.M."/>
            <person name="Rigo L.U."/>
            <person name="Rondinelli E."/>
            <person name="Santos E.B.P."/>
            <person name="Santos F.R."/>
            <person name="Schneider M.P.C."/>
            <person name="Seuanez H.N."/>
            <person name="Silva A.M.R."/>
            <person name="da Silva A.L.C."/>
            <person name="Silva D.W."/>
            <person name="Silva R."/>
            <person name="Simoes I.C."/>
            <person name="Simon D."/>
            <person name="Soares C.M.A."/>
            <person name="Soares R.B.A."/>
            <person name="Souza E.M."/>
            <person name="Souza K.R.L."/>
            <person name="Souza R.C."/>
            <person name="Steffens M.B.R."/>
            <person name="Steindel M."/>
            <person name="Teixeira S.R."/>
            <person name="Urmenyi T."/>
            <person name="Vettore A."/>
            <person name="Wassem R."/>
            <person name="Zaha A."/>
            <person name="Simpson A.J.G."/>
        </authorList>
    </citation>
    <scope>NUCLEOTIDE SEQUENCE [LARGE SCALE GENOMIC DNA]</scope>
    <source>
        <strain>ATCC 12472 / DSM 30191 / JCM 1249 / CCUG 213 / NBRC 12614 / NCIMB 9131 / NCTC 9757 / MK</strain>
    </source>
</reference>
<accession>Q7NQG0</accession>
<name>RL29_CHRVO</name>
<protein>
    <recommendedName>
        <fullName evidence="1">Large ribosomal subunit protein uL29</fullName>
    </recommendedName>
    <alternativeName>
        <fullName evidence="2">50S ribosomal protein L29</fullName>
    </alternativeName>
</protein>
<sequence length="62" mass="7061">MKASELKAKTVDELKAELLSLLKAQFALRMQHATQQLAKTSELKKVRRDIARVRTVLKEKAV</sequence>
<feature type="chain" id="PRO_0000130376" description="Large ribosomal subunit protein uL29">
    <location>
        <begin position="1"/>
        <end position="62"/>
    </location>
</feature>
<comment type="similarity">
    <text evidence="1">Belongs to the universal ribosomal protein uL29 family.</text>
</comment>
<proteinExistence type="inferred from homology"/>
<gene>
    <name evidence="1" type="primary">rpmC</name>
    <name type="ordered locus">CV_4178</name>
</gene>